<feature type="chain" id="PRO_0000385005" description="Protein SEY1">
    <location>
        <begin position="1"/>
        <end position="776"/>
    </location>
</feature>
<feature type="topological domain" description="Cytoplasmic" evidence="1">
    <location>
        <begin position="1"/>
        <end position="681"/>
    </location>
</feature>
<feature type="transmembrane region" description="Helical" evidence="1">
    <location>
        <begin position="682"/>
        <end position="702"/>
    </location>
</feature>
<feature type="topological domain" description="Lumenal" evidence="1">
    <location>
        <begin position="703"/>
        <end position="705"/>
    </location>
</feature>
<feature type="transmembrane region" description="Helical" evidence="1">
    <location>
        <begin position="706"/>
        <end position="726"/>
    </location>
</feature>
<feature type="topological domain" description="Cytoplasmic" evidence="1">
    <location>
        <begin position="727"/>
        <end position="776"/>
    </location>
</feature>
<feature type="domain" description="GB1/RHD3-type G" evidence="2">
    <location>
        <begin position="34"/>
        <end position="263"/>
    </location>
</feature>
<feature type="binding site" evidence="1">
    <location>
        <begin position="44"/>
        <end position="51"/>
    </location>
    <ligand>
        <name>GTP</name>
        <dbReference type="ChEBI" id="CHEBI:37565"/>
    </ligand>
</feature>
<name>SEY1_YEAS1</name>
<protein>
    <recommendedName>
        <fullName evidence="1">Protein SEY1</fullName>
        <ecNumber evidence="1">3.6.5.-</ecNumber>
    </recommendedName>
    <alternativeName>
        <fullName evidence="1">Synthetic enhancer of YOP1 protein</fullName>
    </alternativeName>
</protein>
<keyword id="KW-0256">Endoplasmic reticulum</keyword>
<keyword id="KW-0342">GTP-binding</keyword>
<keyword id="KW-0378">Hydrolase</keyword>
<keyword id="KW-0472">Membrane</keyword>
<keyword id="KW-0547">Nucleotide-binding</keyword>
<keyword id="KW-0812">Transmembrane</keyword>
<keyword id="KW-1133">Transmembrane helix</keyword>
<evidence type="ECO:0000255" key="1">
    <source>
        <dbReference type="HAMAP-Rule" id="MF_03109"/>
    </source>
</evidence>
<evidence type="ECO:0000255" key="2">
    <source>
        <dbReference type="PROSITE-ProRule" id="PRU01052"/>
    </source>
</evidence>
<reference key="1">
    <citation type="submission" date="2005-03" db="EMBL/GenBank/DDBJ databases">
        <title>Annotation of the Saccharomyces cerevisiae RM11-1a genome.</title>
        <authorList>
            <consortium name="The Broad Institute Genome Sequencing Platform"/>
            <person name="Birren B.W."/>
            <person name="Lander E.S."/>
            <person name="Galagan J.E."/>
            <person name="Nusbaum C."/>
            <person name="Devon K."/>
            <person name="Cuomo C."/>
            <person name="Jaffe D.B."/>
            <person name="Butler J."/>
            <person name="Alvarez P."/>
            <person name="Gnerre S."/>
            <person name="Grabherr M."/>
            <person name="Kleber M."/>
            <person name="Mauceli E.W."/>
            <person name="Brockman W."/>
            <person name="MacCallum I.A."/>
            <person name="Rounsley S."/>
            <person name="Young S.K."/>
            <person name="LaButti K."/>
            <person name="Pushparaj V."/>
            <person name="DeCaprio D."/>
            <person name="Crawford M."/>
            <person name="Koehrsen M."/>
            <person name="Engels R."/>
            <person name="Montgomery P."/>
            <person name="Pearson M."/>
            <person name="Howarth C."/>
            <person name="Larson L."/>
            <person name="Luoma S."/>
            <person name="White J."/>
            <person name="O'Leary S."/>
            <person name="Kodira C.D."/>
            <person name="Zeng Q."/>
            <person name="Yandava C."/>
            <person name="Alvarado L."/>
            <person name="Pratt S."/>
            <person name="Kruglyak L."/>
        </authorList>
    </citation>
    <scope>NUCLEOTIDE SEQUENCE [LARGE SCALE GENOMIC DNA]</scope>
    <source>
        <strain>RM11-1a</strain>
    </source>
</reference>
<organism>
    <name type="scientific">Saccharomyces cerevisiae (strain RM11-1a)</name>
    <name type="common">Baker's yeast</name>
    <dbReference type="NCBI Taxonomy" id="285006"/>
    <lineage>
        <taxon>Eukaryota</taxon>
        <taxon>Fungi</taxon>
        <taxon>Dikarya</taxon>
        <taxon>Ascomycota</taxon>
        <taxon>Saccharomycotina</taxon>
        <taxon>Saccharomycetes</taxon>
        <taxon>Saccharomycetales</taxon>
        <taxon>Saccharomycetaceae</taxon>
        <taxon>Saccharomyces</taxon>
    </lineage>
</organism>
<comment type="function">
    <text evidence="1">Cooperates with the reticulon proteins RTN1 and RTN2 and the tubule-shaping DP1 family protein YOP1 to generate and maintain the structure of the tubular endoplasmic reticulum network. Has GTPase activity, which is required for its function in ER organization.</text>
</comment>
<comment type="subunit">
    <text>Interacts with RTN1 and YOP1; GTP binding is not required for these interactions.</text>
</comment>
<comment type="subcellular location">
    <subcellularLocation>
        <location evidence="1">Endoplasmic reticulum membrane</location>
        <topology evidence="1">Multi-pass membrane protein</topology>
    </subcellularLocation>
    <text evidence="1">Enriched in the cortical ER. Concentrated in punctae along the ER tubules.</text>
</comment>
<comment type="similarity">
    <text evidence="2">Belongs to the TRAFAC class dynamin-like GTPase superfamily. GB1/RHD3 GTPase family. RHD3 subfamily.</text>
</comment>
<sequence>MADRSAIQLIDEEKEFHQSALQYFQQCIGNRDVGLDYHVISVFGSQSSGKSTLLNVLFNTNFDTMDAQVKRQQTTKGIWLAHTKQVNTTIEIDNDRPDIFVLDVEGSDGSERGEDQDFERKAALFAIAVSEVLIVNMWEQQIGLYQGNNMALLKTVFEVNLSLFGKNDNDHKVLLLFVIRDHVGVTPLSSLSDSVTRELEKIWTELSKPAGCEGSSLYDYFDLKFVGLAHKLLQEDKFTQDVKKLGDSFVMKGTENYYFKPQYHHRLPLDGWTMYAENCWDQIERNKDLDLPTQQILVARFKTEEISNEALEEFISKYDESIAPLKGNLGSLTSQLVKLKEECLTKYDEQASRYARNVYMEKREALNTNLNSHISGTINEFLESLMEKLWDDLKLEVSSRDKATTSFVESVAAGKSKIEKEFNESMETFKKLGLLISNEEITCKFSDDIEERIKQLRDAELKAKIGRIKKNLVPELKDHVIHLLSHPSKKVWDDIMNDFESTIKDNISAYQVEKDKYDFKIGLSESENAKIYKNIRILAWRTLDTTVHDYLKIDTIVSILRDRFEDVFRYDAEGSPRLWKTEEEIDGTFRVAKEHALEVFEVLSLAVTSDNVEIIPDVPMAEEESGEDNEIYRDNEGVFHSRRFAHILTELQKENVLDQFRRQINITVLDSKRSIITTRTHIPPWIYVLLAVLGWNEFVAVIRNPLFVTLTLILGATFFVIHKFGLWGPVVNVVQSAVGETRTAIKDKLRQFVVEDHEVKESFEMKDFSKNEQKEK</sequence>
<proteinExistence type="inferred from homology"/>
<dbReference type="EC" id="3.6.5.-" evidence="1"/>
<dbReference type="EMBL" id="CH408045">
    <property type="protein sequence ID" value="EDV10751.1"/>
    <property type="molecule type" value="Genomic_DNA"/>
</dbReference>
<dbReference type="SMR" id="B3LJJ8"/>
<dbReference type="HOGENOM" id="CLU_011270_0_0_1"/>
<dbReference type="OrthoDB" id="19444at4893"/>
<dbReference type="Proteomes" id="UP000008335">
    <property type="component" value="Unassembled WGS sequence"/>
</dbReference>
<dbReference type="GO" id="GO:0005789">
    <property type="term" value="C:endoplasmic reticulum membrane"/>
    <property type="evidence" value="ECO:0007669"/>
    <property type="project" value="UniProtKB-SubCell"/>
</dbReference>
<dbReference type="GO" id="GO:0005525">
    <property type="term" value="F:GTP binding"/>
    <property type="evidence" value="ECO:0007669"/>
    <property type="project" value="UniProtKB-UniRule"/>
</dbReference>
<dbReference type="GO" id="GO:0003924">
    <property type="term" value="F:GTPase activity"/>
    <property type="evidence" value="ECO:0007669"/>
    <property type="project" value="UniProtKB-UniRule"/>
</dbReference>
<dbReference type="GO" id="GO:0016320">
    <property type="term" value="P:endoplasmic reticulum membrane fusion"/>
    <property type="evidence" value="ECO:0007669"/>
    <property type="project" value="TreeGrafter"/>
</dbReference>
<dbReference type="CDD" id="cd01851">
    <property type="entry name" value="GBP"/>
    <property type="match status" value="1"/>
</dbReference>
<dbReference type="FunFam" id="3.40.50.300:FF:000727">
    <property type="entry name" value="Protein SEY1 homolog"/>
    <property type="match status" value="1"/>
</dbReference>
<dbReference type="Gene3D" id="3.40.50.300">
    <property type="entry name" value="P-loop containing nucleotide triphosphate hydrolases"/>
    <property type="match status" value="1"/>
</dbReference>
<dbReference type="HAMAP" id="MF_03109">
    <property type="entry name" value="Sey1"/>
    <property type="match status" value="1"/>
</dbReference>
<dbReference type="InterPro" id="IPR030386">
    <property type="entry name" value="G_GB1_RHD3_dom"/>
</dbReference>
<dbReference type="InterPro" id="IPR027417">
    <property type="entry name" value="P-loop_NTPase"/>
</dbReference>
<dbReference type="InterPro" id="IPR008803">
    <property type="entry name" value="RHD3/Sey1"/>
</dbReference>
<dbReference type="InterPro" id="IPR046758">
    <property type="entry name" value="Sey1/RHD3-like_3HB"/>
</dbReference>
<dbReference type="PANTHER" id="PTHR45923">
    <property type="entry name" value="PROTEIN SEY1"/>
    <property type="match status" value="1"/>
</dbReference>
<dbReference type="PANTHER" id="PTHR45923:SF2">
    <property type="entry name" value="PROTEIN SEY1"/>
    <property type="match status" value="1"/>
</dbReference>
<dbReference type="Pfam" id="PF05879">
    <property type="entry name" value="RHD3_GTPase"/>
    <property type="match status" value="1"/>
</dbReference>
<dbReference type="Pfam" id="PF20428">
    <property type="entry name" value="Sey1_3HB"/>
    <property type="match status" value="1"/>
</dbReference>
<dbReference type="SUPFAM" id="SSF52540">
    <property type="entry name" value="P-loop containing nucleoside triphosphate hydrolases"/>
    <property type="match status" value="1"/>
</dbReference>
<dbReference type="PROSITE" id="PS51715">
    <property type="entry name" value="G_GB1_RHD3"/>
    <property type="match status" value="1"/>
</dbReference>
<gene>
    <name evidence="1" type="primary">SEY1</name>
    <name type="ORF">SCRG_01558</name>
</gene>
<accession>B3LJJ8</accession>